<sequence>MPAYRSKTSTAGRNMAGARSLWRATGMKDEDFSKPIIAVVNSFTQFVPGHVHLKDLGQLVAREIEAAGGVAKEFNTIAVDDGIAMGHDGMLYSLPSRDIIADSVEYMVNAHCADAMVCISNCDKITPGMLMAAMRLNIPVVFVSGGPMEAGKTRLANPVTKTIEFKKLDLVDAMVIAADDKYSDADVAEVERSACPTCGSCSGMFTANSMNCLTEALGLSLPGNGTVVATHADREQLFKRAGRRIVELARRYYEQDDERVLPRSVGFKAFENAMTLDIAMGGSTNTILHLLAIAQEAGIDFTMADIDRLSRVVPQLCKVAPNTNKYHIEDVHRAGGIMAILGELDRAGRLHTDAPTVHAPTLGDALAQWDITRTQDEAVRHFYMAGPAGIPTQVAFSQNTRWPSLDLDRAEGCIRSVEHAFSKEGGLAVLRGNIALDGCVVKTAGVDESIHVFEGTAHVTESQDEAVENILADKVKAGDIVIVRYEGPKGGPGMQEMLYPTSYIKSKGLGKACALLTDGRFSGGTSGLSIGHCSPEAAAGGAIGLVQNGDRIRIDIPNRTIDVLVSDEELARRRAEQDAKGWKPAKPRPRKVSAALKAYAKLVMSADKGAVRDLSLLDD</sequence>
<keyword id="KW-0001">2Fe-2S</keyword>
<keyword id="KW-0028">Amino-acid biosynthesis</keyword>
<keyword id="KW-0100">Branched-chain amino acid biosynthesis</keyword>
<keyword id="KW-0408">Iron</keyword>
<keyword id="KW-0411">Iron-sulfur</keyword>
<keyword id="KW-0456">Lyase</keyword>
<keyword id="KW-0460">Magnesium</keyword>
<keyword id="KW-0479">Metal-binding</keyword>
<feature type="chain" id="PRO_1000000950" description="Dihydroxy-acid dehydratase">
    <location>
        <begin position="1"/>
        <end position="619"/>
    </location>
</feature>
<feature type="active site" description="Proton acceptor" evidence="1">
    <location>
        <position position="522"/>
    </location>
</feature>
<feature type="binding site" evidence="1">
    <location>
        <position position="81"/>
    </location>
    <ligand>
        <name>Mg(2+)</name>
        <dbReference type="ChEBI" id="CHEBI:18420"/>
    </ligand>
</feature>
<feature type="binding site" evidence="1">
    <location>
        <position position="122"/>
    </location>
    <ligand>
        <name>[2Fe-2S] cluster</name>
        <dbReference type="ChEBI" id="CHEBI:190135"/>
    </ligand>
</feature>
<feature type="binding site" evidence="1">
    <location>
        <position position="123"/>
    </location>
    <ligand>
        <name>Mg(2+)</name>
        <dbReference type="ChEBI" id="CHEBI:18420"/>
    </ligand>
</feature>
<feature type="binding site" description="via carbamate group" evidence="1">
    <location>
        <position position="124"/>
    </location>
    <ligand>
        <name>Mg(2+)</name>
        <dbReference type="ChEBI" id="CHEBI:18420"/>
    </ligand>
</feature>
<feature type="binding site" evidence="1">
    <location>
        <position position="201"/>
    </location>
    <ligand>
        <name>[2Fe-2S] cluster</name>
        <dbReference type="ChEBI" id="CHEBI:190135"/>
    </ligand>
</feature>
<feature type="binding site" evidence="1">
    <location>
        <position position="496"/>
    </location>
    <ligand>
        <name>Mg(2+)</name>
        <dbReference type="ChEBI" id="CHEBI:18420"/>
    </ligand>
</feature>
<feature type="modified residue" description="N6-carboxylysine" evidence="1">
    <location>
        <position position="124"/>
    </location>
</feature>
<dbReference type="EC" id="4.2.1.9" evidence="1"/>
<dbReference type="EMBL" id="CP000512">
    <property type="protein sequence ID" value="ABM32095.1"/>
    <property type="molecule type" value="Genomic_DNA"/>
</dbReference>
<dbReference type="RefSeq" id="WP_011794645.1">
    <property type="nucleotide sequence ID" value="NC_008752.1"/>
</dbReference>
<dbReference type="SMR" id="A1TMA7"/>
<dbReference type="STRING" id="397945.Aave_1506"/>
<dbReference type="GeneID" id="79791180"/>
<dbReference type="KEGG" id="aav:Aave_1506"/>
<dbReference type="eggNOG" id="COG0129">
    <property type="taxonomic scope" value="Bacteria"/>
</dbReference>
<dbReference type="HOGENOM" id="CLU_014271_4_2_4"/>
<dbReference type="OrthoDB" id="9807077at2"/>
<dbReference type="UniPathway" id="UPA00047">
    <property type="reaction ID" value="UER00057"/>
</dbReference>
<dbReference type="UniPathway" id="UPA00049">
    <property type="reaction ID" value="UER00061"/>
</dbReference>
<dbReference type="Proteomes" id="UP000002596">
    <property type="component" value="Chromosome"/>
</dbReference>
<dbReference type="GO" id="GO:0005829">
    <property type="term" value="C:cytosol"/>
    <property type="evidence" value="ECO:0007669"/>
    <property type="project" value="TreeGrafter"/>
</dbReference>
<dbReference type="GO" id="GO:0051537">
    <property type="term" value="F:2 iron, 2 sulfur cluster binding"/>
    <property type="evidence" value="ECO:0007669"/>
    <property type="project" value="UniProtKB-UniRule"/>
</dbReference>
<dbReference type="GO" id="GO:0004160">
    <property type="term" value="F:dihydroxy-acid dehydratase activity"/>
    <property type="evidence" value="ECO:0007669"/>
    <property type="project" value="UniProtKB-UniRule"/>
</dbReference>
<dbReference type="GO" id="GO:0000287">
    <property type="term" value="F:magnesium ion binding"/>
    <property type="evidence" value="ECO:0007669"/>
    <property type="project" value="UniProtKB-UniRule"/>
</dbReference>
<dbReference type="GO" id="GO:0009097">
    <property type="term" value="P:isoleucine biosynthetic process"/>
    <property type="evidence" value="ECO:0007669"/>
    <property type="project" value="UniProtKB-UniRule"/>
</dbReference>
<dbReference type="GO" id="GO:0009099">
    <property type="term" value="P:L-valine biosynthetic process"/>
    <property type="evidence" value="ECO:0007669"/>
    <property type="project" value="UniProtKB-UniRule"/>
</dbReference>
<dbReference type="FunFam" id="3.50.30.80:FF:000001">
    <property type="entry name" value="Dihydroxy-acid dehydratase"/>
    <property type="match status" value="1"/>
</dbReference>
<dbReference type="Gene3D" id="3.50.30.80">
    <property type="entry name" value="IlvD/EDD C-terminal domain-like"/>
    <property type="match status" value="1"/>
</dbReference>
<dbReference type="HAMAP" id="MF_00012">
    <property type="entry name" value="IlvD"/>
    <property type="match status" value="1"/>
</dbReference>
<dbReference type="InterPro" id="IPR042096">
    <property type="entry name" value="Dihydro-acid_dehy_C"/>
</dbReference>
<dbReference type="InterPro" id="IPR004404">
    <property type="entry name" value="DihydroxyA_deHydtase"/>
</dbReference>
<dbReference type="InterPro" id="IPR020558">
    <property type="entry name" value="DiOHA_6PGluconate_deHydtase_CS"/>
</dbReference>
<dbReference type="InterPro" id="IPR056740">
    <property type="entry name" value="ILV_EDD_C"/>
</dbReference>
<dbReference type="InterPro" id="IPR000581">
    <property type="entry name" value="ILV_EDD_N"/>
</dbReference>
<dbReference type="InterPro" id="IPR037237">
    <property type="entry name" value="IlvD/EDD_N"/>
</dbReference>
<dbReference type="NCBIfam" id="TIGR00110">
    <property type="entry name" value="ilvD"/>
    <property type="match status" value="1"/>
</dbReference>
<dbReference type="NCBIfam" id="NF009103">
    <property type="entry name" value="PRK12448.1"/>
    <property type="match status" value="1"/>
</dbReference>
<dbReference type="PANTHER" id="PTHR43661">
    <property type="entry name" value="D-XYLONATE DEHYDRATASE"/>
    <property type="match status" value="1"/>
</dbReference>
<dbReference type="PANTHER" id="PTHR43661:SF3">
    <property type="entry name" value="D-XYLONATE DEHYDRATASE YAGF-RELATED"/>
    <property type="match status" value="1"/>
</dbReference>
<dbReference type="Pfam" id="PF24877">
    <property type="entry name" value="ILV_EDD_C"/>
    <property type="match status" value="1"/>
</dbReference>
<dbReference type="Pfam" id="PF00920">
    <property type="entry name" value="ILVD_EDD_N"/>
    <property type="match status" value="1"/>
</dbReference>
<dbReference type="SUPFAM" id="SSF143975">
    <property type="entry name" value="IlvD/EDD N-terminal domain-like"/>
    <property type="match status" value="1"/>
</dbReference>
<dbReference type="SUPFAM" id="SSF52016">
    <property type="entry name" value="LeuD/IlvD-like"/>
    <property type="match status" value="1"/>
</dbReference>
<dbReference type="PROSITE" id="PS00886">
    <property type="entry name" value="ILVD_EDD_1"/>
    <property type="match status" value="1"/>
</dbReference>
<dbReference type="PROSITE" id="PS00887">
    <property type="entry name" value="ILVD_EDD_2"/>
    <property type="match status" value="1"/>
</dbReference>
<protein>
    <recommendedName>
        <fullName evidence="1">Dihydroxy-acid dehydratase</fullName>
        <shortName evidence="1">DAD</shortName>
        <ecNumber evidence="1">4.2.1.9</ecNumber>
    </recommendedName>
</protein>
<reference key="1">
    <citation type="submission" date="2006-12" db="EMBL/GenBank/DDBJ databases">
        <title>Complete sequence of Acidovorax avenae subsp. citrulli AAC00-1.</title>
        <authorList>
            <person name="Copeland A."/>
            <person name="Lucas S."/>
            <person name="Lapidus A."/>
            <person name="Barry K."/>
            <person name="Detter J.C."/>
            <person name="Glavina del Rio T."/>
            <person name="Dalin E."/>
            <person name="Tice H."/>
            <person name="Pitluck S."/>
            <person name="Kiss H."/>
            <person name="Brettin T."/>
            <person name="Bruce D."/>
            <person name="Han C."/>
            <person name="Tapia R."/>
            <person name="Gilna P."/>
            <person name="Schmutz J."/>
            <person name="Larimer F."/>
            <person name="Land M."/>
            <person name="Hauser L."/>
            <person name="Kyrpides N."/>
            <person name="Kim E."/>
            <person name="Stahl D."/>
            <person name="Richardson P."/>
        </authorList>
    </citation>
    <scope>NUCLEOTIDE SEQUENCE [LARGE SCALE GENOMIC DNA]</scope>
    <source>
        <strain>AAC00-1</strain>
    </source>
</reference>
<name>ILVD_PARC0</name>
<organism>
    <name type="scientific">Paracidovorax citrulli (strain AAC00-1)</name>
    <name type="common">Acidovorax citrulli</name>
    <dbReference type="NCBI Taxonomy" id="397945"/>
    <lineage>
        <taxon>Bacteria</taxon>
        <taxon>Pseudomonadati</taxon>
        <taxon>Pseudomonadota</taxon>
        <taxon>Betaproteobacteria</taxon>
        <taxon>Burkholderiales</taxon>
        <taxon>Comamonadaceae</taxon>
        <taxon>Paracidovorax</taxon>
    </lineage>
</organism>
<evidence type="ECO:0000255" key="1">
    <source>
        <dbReference type="HAMAP-Rule" id="MF_00012"/>
    </source>
</evidence>
<proteinExistence type="inferred from homology"/>
<comment type="function">
    <text evidence="1">Functions in the biosynthesis of branched-chain amino acids. Catalyzes the dehydration of (2R,3R)-2,3-dihydroxy-3-methylpentanoate (2,3-dihydroxy-3-methylvalerate) into 2-oxo-3-methylpentanoate (2-oxo-3-methylvalerate) and of (2R)-2,3-dihydroxy-3-methylbutanoate (2,3-dihydroxyisovalerate) into 2-oxo-3-methylbutanoate (2-oxoisovalerate), the penultimate precursor to L-isoleucine and L-valine, respectively.</text>
</comment>
<comment type="catalytic activity">
    <reaction evidence="1">
        <text>(2R)-2,3-dihydroxy-3-methylbutanoate = 3-methyl-2-oxobutanoate + H2O</text>
        <dbReference type="Rhea" id="RHEA:24809"/>
        <dbReference type="ChEBI" id="CHEBI:11851"/>
        <dbReference type="ChEBI" id="CHEBI:15377"/>
        <dbReference type="ChEBI" id="CHEBI:49072"/>
        <dbReference type="EC" id="4.2.1.9"/>
    </reaction>
    <physiologicalReaction direction="left-to-right" evidence="1">
        <dbReference type="Rhea" id="RHEA:24810"/>
    </physiologicalReaction>
</comment>
<comment type="catalytic activity">
    <reaction evidence="1">
        <text>(2R,3R)-2,3-dihydroxy-3-methylpentanoate = (S)-3-methyl-2-oxopentanoate + H2O</text>
        <dbReference type="Rhea" id="RHEA:27694"/>
        <dbReference type="ChEBI" id="CHEBI:15377"/>
        <dbReference type="ChEBI" id="CHEBI:35146"/>
        <dbReference type="ChEBI" id="CHEBI:49258"/>
        <dbReference type="EC" id="4.2.1.9"/>
    </reaction>
    <physiologicalReaction direction="left-to-right" evidence="1">
        <dbReference type="Rhea" id="RHEA:27695"/>
    </physiologicalReaction>
</comment>
<comment type="cofactor">
    <cofactor evidence="1">
        <name>[2Fe-2S] cluster</name>
        <dbReference type="ChEBI" id="CHEBI:190135"/>
    </cofactor>
    <text evidence="1">Binds 1 [2Fe-2S] cluster per subunit. This cluster acts as a Lewis acid cofactor.</text>
</comment>
<comment type="cofactor">
    <cofactor evidence="1">
        <name>Mg(2+)</name>
        <dbReference type="ChEBI" id="CHEBI:18420"/>
    </cofactor>
</comment>
<comment type="pathway">
    <text evidence="1">Amino-acid biosynthesis; L-isoleucine biosynthesis; L-isoleucine from 2-oxobutanoate: step 3/4.</text>
</comment>
<comment type="pathway">
    <text evidence="1">Amino-acid biosynthesis; L-valine biosynthesis; L-valine from pyruvate: step 3/4.</text>
</comment>
<comment type="subunit">
    <text evidence="1">Homodimer.</text>
</comment>
<comment type="similarity">
    <text evidence="1">Belongs to the IlvD/Edd family.</text>
</comment>
<gene>
    <name evidence="1" type="primary">ilvD</name>
    <name type="ordered locus">Aave_1506</name>
</gene>
<accession>A1TMA7</accession>